<name>FTSL_ALIF1</name>
<dbReference type="EMBL" id="CP000020">
    <property type="protein sequence ID" value="AAW86703.1"/>
    <property type="molecule type" value="Genomic_DNA"/>
</dbReference>
<dbReference type="RefSeq" id="WP_011262637.1">
    <property type="nucleotide sequence ID" value="NC_006840.2"/>
</dbReference>
<dbReference type="RefSeq" id="YP_205591.1">
    <property type="nucleotide sequence ID" value="NC_006840.2"/>
</dbReference>
<dbReference type="SMR" id="Q5E2P3"/>
<dbReference type="STRING" id="312309.VF_2208"/>
<dbReference type="EnsemblBacteria" id="AAW86703">
    <property type="protein sequence ID" value="AAW86703"/>
    <property type="gene ID" value="VF_2208"/>
</dbReference>
<dbReference type="GeneID" id="54164924"/>
<dbReference type="KEGG" id="vfi:VF_2208"/>
<dbReference type="PATRIC" id="fig|312309.11.peg.2247"/>
<dbReference type="eggNOG" id="COG3116">
    <property type="taxonomic scope" value="Bacteria"/>
</dbReference>
<dbReference type="HOGENOM" id="CLU_156524_2_0_6"/>
<dbReference type="OrthoDB" id="6196803at2"/>
<dbReference type="Proteomes" id="UP000000537">
    <property type="component" value="Chromosome I"/>
</dbReference>
<dbReference type="GO" id="GO:0032153">
    <property type="term" value="C:cell division site"/>
    <property type="evidence" value="ECO:0007669"/>
    <property type="project" value="UniProtKB-UniRule"/>
</dbReference>
<dbReference type="GO" id="GO:0005886">
    <property type="term" value="C:plasma membrane"/>
    <property type="evidence" value="ECO:0007669"/>
    <property type="project" value="UniProtKB-SubCell"/>
</dbReference>
<dbReference type="GO" id="GO:0043093">
    <property type="term" value="P:FtsZ-dependent cytokinesis"/>
    <property type="evidence" value="ECO:0007669"/>
    <property type="project" value="UniProtKB-UniRule"/>
</dbReference>
<dbReference type="HAMAP" id="MF_00910">
    <property type="entry name" value="FtsL"/>
    <property type="match status" value="1"/>
</dbReference>
<dbReference type="InterPro" id="IPR011922">
    <property type="entry name" value="Cell_div_FtsL"/>
</dbReference>
<dbReference type="NCBIfam" id="TIGR02209">
    <property type="entry name" value="ftsL_broad"/>
    <property type="match status" value="1"/>
</dbReference>
<dbReference type="NCBIfam" id="NF008040">
    <property type="entry name" value="PRK10772.1"/>
    <property type="match status" value="1"/>
</dbReference>
<dbReference type="PANTHER" id="PTHR37479">
    <property type="entry name" value="CELL DIVISION PROTEIN FTSL"/>
    <property type="match status" value="1"/>
</dbReference>
<dbReference type="PANTHER" id="PTHR37479:SF1">
    <property type="entry name" value="CELL DIVISION PROTEIN FTSL"/>
    <property type="match status" value="1"/>
</dbReference>
<dbReference type="Pfam" id="PF04999">
    <property type="entry name" value="FtsL"/>
    <property type="match status" value="1"/>
</dbReference>
<reference key="1">
    <citation type="journal article" date="2005" name="Proc. Natl. Acad. Sci. U.S.A.">
        <title>Complete genome sequence of Vibrio fischeri: a symbiotic bacterium with pathogenic congeners.</title>
        <authorList>
            <person name="Ruby E.G."/>
            <person name="Urbanowski M."/>
            <person name="Campbell J."/>
            <person name="Dunn A."/>
            <person name="Faini M."/>
            <person name="Gunsalus R."/>
            <person name="Lostroh P."/>
            <person name="Lupp C."/>
            <person name="McCann J."/>
            <person name="Millikan D."/>
            <person name="Schaefer A."/>
            <person name="Stabb E."/>
            <person name="Stevens A."/>
            <person name="Visick K."/>
            <person name="Whistler C."/>
            <person name="Greenberg E.P."/>
        </authorList>
    </citation>
    <scope>NUCLEOTIDE SEQUENCE [LARGE SCALE GENOMIC DNA]</scope>
    <source>
        <strain>ATCC 700601 / ES114</strain>
    </source>
</reference>
<gene>
    <name evidence="1" type="primary">ftsL</name>
    <name type="ordered locus">VF_2208</name>
</gene>
<feature type="chain" id="PRO_0000414573" description="Cell division protein FtsL">
    <location>
        <begin position="1"/>
        <end position="108"/>
    </location>
</feature>
<feature type="topological domain" description="Cytoplasmic" evidence="1">
    <location>
        <begin position="1"/>
        <end position="24"/>
    </location>
</feature>
<feature type="transmembrane region" description="Helical" evidence="1">
    <location>
        <begin position="25"/>
        <end position="45"/>
    </location>
</feature>
<feature type="topological domain" description="Periplasmic" evidence="1">
    <location>
        <begin position="46"/>
        <end position="108"/>
    </location>
</feature>
<organism>
    <name type="scientific">Aliivibrio fischeri (strain ATCC 700601 / ES114)</name>
    <name type="common">Vibrio fischeri</name>
    <dbReference type="NCBI Taxonomy" id="312309"/>
    <lineage>
        <taxon>Bacteria</taxon>
        <taxon>Pseudomonadati</taxon>
        <taxon>Pseudomonadota</taxon>
        <taxon>Gammaproteobacteria</taxon>
        <taxon>Vibrionales</taxon>
        <taxon>Vibrionaceae</taxon>
        <taxon>Aliivibrio</taxon>
    </lineage>
</organism>
<evidence type="ECO:0000255" key="1">
    <source>
        <dbReference type="HAMAP-Rule" id="MF_00910"/>
    </source>
</evidence>
<proteinExistence type="inferred from homology"/>
<accession>Q5E2P3</accession>
<protein>
    <recommendedName>
        <fullName evidence="1">Cell division protein FtsL</fullName>
    </recommendedName>
</protein>
<comment type="function">
    <text evidence="1">Essential cell division protein. May link together the upstream cell division proteins, which are predominantly cytoplasmic, with the downstream cell division proteins, which are predominantly periplasmic.</text>
</comment>
<comment type="subunit">
    <text evidence="1">Part of a complex composed of FtsB, FtsL and FtsQ.</text>
</comment>
<comment type="subcellular location">
    <subcellularLocation>
        <location evidence="1">Cell inner membrane</location>
        <topology evidence="1">Single-pass type II membrane protein</topology>
    </subcellularLocation>
    <text evidence="1">Localizes to the division septum where it forms a ring structure.</text>
</comment>
<comment type="similarity">
    <text evidence="1">Belongs to the FtsL family.</text>
</comment>
<keyword id="KW-0131">Cell cycle</keyword>
<keyword id="KW-0132">Cell division</keyword>
<keyword id="KW-0997">Cell inner membrane</keyword>
<keyword id="KW-1003">Cell membrane</keyword>
<keyword id="KW-0472">Membrane</keyword>
<keyword id="KW-1185">Reference proteome</keyword>
<keyword id="KW-0812">Transmembrane</keyword>
<keyword id="KW-1133">Transmembrane helix</keyword>
<sequence>MSKDTASQPSLTKLIGLDIFGVGRLHAILLICIFLSAIGVVLATHNTRQMTVQRENLLLEKDILDGEWRNLILEESALAEHSRVQARSVRELDMERPAPDKEVIIKLR</sequence>